<dbReference type="EC" id="3.1.3.16"/>
<dbReference type="EMBL" id="AF161530">
    <property type="protein sequence ID" value="AAF29145.1"/>
    <property type="molecule type" value="mRNA"/>
</dbReference>
<dbReference type="EMBL" id="AF277178">
    <property type="protein sequence ID" value="AAK07538.1"/>
    <property type="molecule type" value="mRNA"/>
</dbReference>
<dbReference type="EMBL" id="AJ276409">
    <property type="protein sequence ID" value="CAC81713.1"/>
    <property type="molecule type" value="mRNA"/>
</dbReference>
<dbReference type="EMBL" id="AK001809">
    <property type="protein sequence ID" value="BAA91921.1"/>
    <property type="molecule type" value="mRNA"/>
</dbReference>
<dbReference type="EMBL" id="AK023110">
    <property type="protein sequence ID" value="BAB14410.1"/>
    <property type="molecule type" value="mRNA"/>
</dbReference>
<dbReference type="EMBL" id="AK291324">
    <property type="protein sequence ID" value="BAF84013.1"/>
    <property type="molecule type" value="mRNA"/>
</dbReference>
<dbReference type="EMBL" id="AL645728">
    <property type="status" value="NOT_ANNOTATED_CDS"/>
    <property type="molecule type" value="Genomic_DNA"/>
</dbReference>
<dbReference type="EMBL" id="CH471183">
    <property type="protein sequence ID" value="EAW56182.1"/>
    <property type="molecule type" value="Genomic_DNA"/>
</dbReference>
<dbReference type="EMBL" id="CH471183">
    <property type="protein sequence ID" value="EAW56183.1"/>
    <property type="molecule type" value="Genomic_DNA"/>
</dbReference>
<dbReference type="EMBL" id="BC008070">
    <property type="protein sequence ID" value="AAH08070.1"/>
    <property type="molecule type" value="mRNA"/>
</dbReference>
<dbReference type="CCDS" id="CCDS32.1">
    <molecule id="Q9NP77-1"/>
</dbReference>
<dbReference type="RefSeq" id="NP_054907.1">
    <molecule id="Q9NP77-1"/>
    <property type="nucleotide sequence ID" value="NM_014188.3"/>
</dbReference>
<dbReference type="PDB" id="3O2Q">
    <property type="method" value="X-ray"/>
    <property type="resolution" value="2.40 A"/>
    <property type="chains" value="B/E=1-194"/>
</dbReference>
<dbReference type="PDB" id="3O2S">
    <property type="method" value="X-ray"/>
    <property type="resolution" value="2.50 A"/>
    <property type="chains" value="B=1-194"/>
</dbReference>
<dbReference type="PDB" id="4H3H">
    <property type="method" value="X-ray"/>
    <property type="resolution" value="2.20 A"/>
    <property type="chains" value="B/E=1-194"/>
</dbReference>
<dbReference type="PDB" id="4H3K">
    <property type="method" value="X-ray"/>
    <property type="resolution" value="2.00 A"/>
    <property type="chains" value="B/E=1-194"/>
</dbReference>
<dbReference type="PDBsum" id="3O2Q"/>
<dbReference type="PDBsum" id="3O2S"/>
<dbReference type="PDBsum" id="4H3H"/>
<dbReference type="PDBsum" id="4H3K"/>
<dbReference type="SMR" id="Q9NP77"/>
<dbReference type="BioGRID" id="118869">
    <property type="interactions" value="71"/>
</dbReference>
<dbReference type="CORUM" id="Q9NP77"/>
<dbReference type="DIP" id="DIP-53666N"/>
<dbReference type="FunCoup" id="Q9NP77">
    <property type="interactions" value="3677"/>
</dbReference>
<dbReference type="IntAct" id="Q9NP77">
    <property type="interactions" value="30"/>
</dbReference>
<dbReference type="MINT" id="Q9NP77"/>
<dbReference type="STRING" id="9606.ENSP00000291386"/>
<dbReference type="BindingDB" id="Q9NP77"/>
<dbReference type="ChEMBL" id="CHEMBL3317331"/>
<dbReference type="DEPOD" id="SSU72"/>
<dbReference type="GlyGen" id="Q9NP77">
    <property type="glycosylation" value="1 site, 1 O-linked glycan (1 site)"/>
</dbReference>
<dbReference type="iPTMnet" id="Q9NP77"/>
<dbReference type="PhosphoSitePlus" id="Q9NP77"/>
<dbReference type="BioMuta" id="SSU72"/>
<dbReference type="DMDM" id="74752877"/>
<dbReference type="jPOST" id="Q9NP77"/>
<dbReference type="MassIVE" id="Q9NP77"/>
<dbReference type="PaxDb" id="9606-ENSP00000291386"/>
<dbReference type="PeptideAtlas" id="Q9NP77"/>
<dbReference type="ProteomicsDB" id="81915">
    <molecule id="Q9NP77-1"/>
</dbReference>
<dbReference type="ProteomicsDB" id="81916">
    <molecule id="Q9NP77-2"/>
</dbReference>
<dbReference type="Pumba" id="Q9NP77"/>
<dbReference type="Antibodypedia" id="26440">
    <property type="antibodies" value="130 antibodies from 20 providers"/>
</dbReference>
<dbReference type="DNASU" id="29101"/>
<dbReference type="Ensembl" id="ENST00000291386.4">
    <molecule id="Q9NP77-1"/>
    <property type="protein sequence ID" value="ENSP00000291386.3"/>
    <property type="gene ID" value="ENSG00000160075.12"/>
</dbReference>
<dbReference type="Ensembl" id="ENST00000359060.5">
    <molecule id="Q9NP77-2"/>
    <property type="protein sequence ID" value="ENSP00000351955.3"/>
    <property type="gene ID" value="ENSG00000160075.12"/>
</dbReference>
<dbReference type="GeneID" id="29101"/>
<dbReference type="KEGG" id="hsa:29101"/>
<dbReference type="MANE-Select" id="ENST00000291386.4">
    <property type="protein sequence ID" value="ENSP00000291386.3"/>
    <property type="RefSeq nucleotide sequence ID" value="NM_014188.3"/>
    <property type="RefSeq protein sequence ID" value="NP_054907.1"/>
</dbReference>
<dbReference type="UCSC" id="uc001agd.4">
    <molecule id="Q9NP77-1"/>
    <property type="organism name" value="human"/>
</dbReference>
<dbReference type="AGR" id="HGNC:25016"/>
<dbReference type="CTD" id="29101"/>
<dbReference type="DisGeNET" id="29101"/>
<dbReference type="GeneCards" id="SSU72"/>
<dbReference type="HGNC" id="HGNC:25016">
    <property type="gene designation" value="SSU72"/>
</dbReference>
<dbReference type="HPA" id="ENSG00000160075">
    <property type="expression patterns" value="Low tissue specificity"/>
</dbReference>
<dbReference type="MIM" id="617680">
    <property type="type" value="gene"/>
</dbReference>
<dbReference type="neXtProt" id="NX_Q9NP77"/>
<dbReference type="OpenTargets" id="ENSG00000160075"/>
<dbReference type="PharmGKB" id="PA142670866"/>
<dbReference type="VEuPathDB" id="HostDB:ENSG00000160075"/>
<dbReference type="eggNOG" id="KOG2424">
    <property type="taxonomic scope" value="Eukaryota"/>
</dbReference>
<dbReference type="GeneTree" id="ENSGT00390000010165"/>
<dbReference type="HOGENOM" id="CLU_062463_2_1_1"/>
<dbReference type="InParanoid" id="Q9NP77"/>
<dbReference type="OMA" id="PNCYEFG"/>
<dbReference type="OrthoDB" id="57957at2759"/>
<dbReference type="PAN-GO" id="Q9NP77">
    <property type="GO annotations" value="5 GO annotations based on evolutionary models"/>
</dbReference>
<dbReference type="PhylomeDB" id="Q9NP77"/>
<dbReference type="TreeFam" id="TF300194"/>
<dbReference type="PathwayCommons" id="Q9NP77"/>
<dbReference type="Reactome" id="R-HSA-6807505">
    <property type="pathway name" value="RNA polymerase II transcribes snRNA genes"/>
</dbReference>
<dbReference type="SignaLink" id="Q9NP77"/>
<dbReference type="SIGNOR" id="Q9NP77"/>
<dbReference type="BioGRID-ORCS" id="29101">
    <property type="hits" value="848 hits in 1179 CRISPR screens"/>
</dbReference>
<dbReference type="ChiTaRS" id="SSU72">
    <property type="organism name" value="human"/>
</dbReference>
<dbReference type="EvolutionaryTrace" id="Q9NP77"/>
<dbReference type="GenomeRNAi" id="29101"/>
<dbReference type="Pharos" id="Q9NP77">
    <property type="development level" value="Tbio"/>
</dbReference>
<dbReference type="PRO" id="PR:Q9NP77"/>
<dbReference type="Proteomes" id="UP000005640">
    <property type="component" value="Chromosome 1"/>
</dbReference>
<dbReference type="RNAct" id="Q9NP77">
    <property type="molecule type" value="protein"/>
</dbReference>
<dbReference type="Bgee" id="ENSG00000160075">
    <property type="expression patterns" value="Expressed in parotid gland and 186 other cell types or tissues"/>
</dbReference>
<dbReference type="GO" id="GO:0005829">
    <property type="term" value="C:cytosol"/>
    <property type="evidence" value="ECO:0000314"/>
    <property type="project" value="HPA"/>
</dbReference>
<dbReference type="GO" id="GO:0005847">
    <property type="term" value="C:mRNA cleavage and polyadenylation specificity factor complex"/>
    <property type="evidence" value="ECO:0000318"/>
    <property type="project" value="GO_Central"/>
</dbReference>
<dbReference type="GO" id="GO:0005654">
    <property type="term" value="C:nucleoplasm"/>
    <property type="evidence" value="ECO:0000314"/>
    <property type="project" value="HPA"/>
</dbReference>
<dbReference type="GO" id="GO:0008420">
    <property type="term" value="F:RNA polymerase II CTD heptapeptide repeat phosphatase activity"/>
    <property type="evidence" value="ECO:0000314"/>
    <property type="project" value="UniProtKB"/>
</dbReference>
<dbReference type="GO" id="GO:0180010">
    <property type="term" value="P:co-transcriptional mRNA 3'-end processing, cleavage and polyadenylation pathway"/>
    <property type="evidence" value="ECO:0000315"/>
    <property type="project" value="UniProtKB"/>
</dbReference>
<dbReference type="GO" id="GO:0006369">
    <property type="term" value="P:termination of RNA polymerase II transcription"/>
    <property type="evidence" value="ECO:0000318"/>
    <property type="project" value="GO_Central"/>
</dbReference>
<dbReference type="FunFam" id="3.40.50.2300:FF:000039">
    <property type="entry name" value="RNA polymerase II subunit A C-terminal domain phosphatase"/>
    <property type="match status" value="1"/>
</dbReference>
<dbReference type="FunFam" id="3.40.50.2300:FF:000066">
    <property type="entry name" value="RNA polymerase II subunit A C-terminal domain phosphatase SSU72"/>
    <property type="match status" value="1"/>
</dbReference>
<dbReference type="Gene3D" id="3.40.50.2300">
    <property type="match status" value="2"/>
</dbReference>
<dbReference type="InterPro" id="IPR006811">
    <property type="entry name" value="RNA_pol_II_suA"/>
</dbReference>
<dbReference type="PANTHER" id="PTHR20383">
    <property type="entry name" value="RNA POLYMERASE II SUBUNIT A C-TERMINAL DOMAIN PHOSPHATASE"/>
    <property type="match status" value="1"/>
</dbReference>
<dbReference type="Pfam" id="PF04722">
    <property type="entry name" value="Ssu72"/>
    <property type="match status" value="1"/>
</dbReference>
<proteinExistence type="evidence at protein level"/>
<accession>Q9NP77</accession>
<accession>Q9BZS6</accession>
<accession>Q9H933</accession>
<name>SSU72_HUMAN</name>
<gene>
    <name type="primary">SSU72</name>
    <name type="ORF">HSPC182</name>
    <name type="ORF">PNAS-120</name>
</gene>
<sequence length="194" mass="22574">MPSSPLRVAVVCSSNQNRSMEAHNILSKRGFSVRSFGTGTHVKLPGPAPDKPNVYDFKTTYDQMYNDLLRKDKELYTQNGILHMLDRNKRIKPRPERFQNCKDLFDLILTCEERVYDQVVEDLNSREQETCQPVHVVNVDIQDNHEEATLGAFLICELCQCIQHTEDMENEIDELLQEFEEKSGRTFLHTVCFY</sequence>
<evidence type="ECO:0000255" key="1"/>
<evidence type="ECO:0000269" key="2">
    <source>
    </source>
</evidence>
<evidence type="ECO:0000269" key="3">
    <source>
    </source>
</evidence>
<evidence type="ECO:0000269" key="4">
    <source>
    </source>
</evidence>
<evidence type="ECO:0000269" key="5">
    <source>
    </source>
</evidence>
<evidence type="ECO:0000305" key="6"/>
<evidence type="ECO:0007829" key="7">
    <source>
        <dbReference type="PDB" id="4H3K"/>
    </source>
</evidence>
<feature type="chain" id="PRO_0000330012" description="RNA polymerase II subunit A C-terminal domain phosphatase SSU72">
    <location>
        <begin position="1"/>
        <end position="194"/>
    </location>
</feature>
<feature type="coiled-coil region" evidence="1">
    <location>
        <begin position="160"/>
        <end position="186"/>
    </location>
</feature>
<feature type="splice variant" id="VSP_033005" description="In isoform 2." evidence="6">
    <original>TQNGILHMLDRNKRIKPRPERFQNCKDLFDLILTCEERVYDQVVEDLNSREQETCQPVHVVNVDIQDNHEEATLGAFLICELCQCIQHTEDMENEIDELLQEFEEKSGRTFLHTVCFY</original>
    <variation>PSGLPFKNPPCGPPWKVLRVARAQEACHPVQCTHWLLCLCESLVSIPGARRIVHGLVPVPPMAVGVVRRTDTVWGSP</variation>
    <location>
        <begin position="77"/>
        <end position="194"/>
    </location>
</feature>
<feature type="mutagenesis site" description="Abolishes phosphatase activity." evidence="2">
    <original>C</original>
    <variation>S</variation>
    <location>
        <position position="12"/>
    </location>
</feature>
<feature type="sequence conflict" description="In Ref. 3; AAK07538." evidence="6" ref="3">
    <original>KS</original>
    <variation>RV</variation>
    <location>
        <begin position="182"/>
        <end position="183"/>
    </location>
</feature>
<feature type="strand" evidence="7">
    <location>
        <begin position="7"/>
        <end position="17"/>
    </location>
</feature>
<feature type="helix" evidence="7">
    <location>
        <begin position="18"/>
        <end position="28"/>
    </location>
</feature>
<feature type="strand" evidence="7">
    <location>
        <begin position="32"/>
        <end position="37"/>
    </location>
</feature>
<feature type="strand" evidence="7">
    <location>
        <begin position="39"/>
        <end position="44"/>
    </location>
</feature>
<feature type="strand" evidence="7">
    <location>
        <begin position="53"/>
        <end position="55"/>
    </location>
</feature>
<feature type="helix" evidence="7">
    <location>
        <begin position="61"/>
        <end position="78"/>
    </location>
</feature>
<feature type="helix" evidence="7">
    <location>
        <begin position="81"/>
        <end position="89"/>
    </location>
</feature>
<feature type="helix" evidence="7">
    <location>
        <begin position="98"/>
        <end position="100"/>
    </location>
</feature>
<feature type="strand" evidence="7">
    <location>
        <begin position="106"/>
        <end position="112"/>
    </location>
</feature>
<feature type="helix" evidence="7">
    <location>
        <begin position="113"/>
        <end position="125"/>
    </location>
</feature>
<feature type="strand" evidence="7">
    <location>
        <begin position="133"/>
        <end position="139"/>
    </location>
</feature>
<feature type="helix" evidence="7">
    <location>
        <begin position="145"/>
        <end position="164"/>
    </location>
</feature>
<feature type="helix" evidence="7">
    <location>
        <begin position="168"/>
        <end position="183"/>
    </location>
</feature>
<feature type="strand" evidence="7">
    <location>
        <begin position="187"/>
        <end position="193"/>
    </location>
</feature>
<comment type="function">
    <text evidence="2 3 4">Protein phosphatase that catalyzes the dephosphorylation of the C-terminal domain of RNA polymerase II. Plays a role in RNA processing and termination. Plays a role in pre-mRNA polyadenylation via its interaction with SYMPK.</text>
</comment>
<comment type="catalytic activity">
    <reaction evidence="3 4">
        <text>O-phospho-L-seryl-[protein] + H2O = L-seryl-[protein] + phosphate</text>
        <dbReference type="Rhea" id="RHEA:20629"/>
        <dbReference type="Rhea" id="RHEA-COMP:9863"/>
        <dbReference type="Rhea" id="RHEA-COMP:11604"/>
        <dbReference type="ChEBI" id="CHEBI:15377"/>
        <dbReference type="ChEBI" id="CHEBI:29999"/>
        <dbReference type="ChEBI" id="CHEBI:43474"/>
        <dbReference type="ChEBI" id="CHEBI:83421"/>
        <dbReference type="EC" id="3.1.3.16"/>
    </reaction>
</comment>
<comment type="catalytic activity">
    <reaction evidence="3 4">
        <text>O-phospho-L-threonyl-[protein] + H2O = L-threonyl-[protein] + phosphate</text>
        <dbReference type="Rhea" id="RHEA:47004"/>
        <dbReference type="Rhea" id="RHEA-COMP:11060"/>
        <dbReference type="Rhea" id="RHEA-COMP:11605"/>
        <dbReference type="ChEBI" id="CHEBI:15377"/>
        <dbReference type="ChEBI" id="CHEBI:30013"/>
        <dbReference type="ChEBI" id="CHEBI:43474"/>
        <dbReference type="ChEBI" id="CHEBI:61977"/>
        <dbReference type="EC" id="3.1.3.16"/>
    </reaction>
</comment>
<comment type="subunit">
    <text evidence="2 3 4 5">Interacts with GTF2B (via C-terminus); this interaction is inhibited by SYMPK (PubMed:15659578, PubMed:29158257). Interacts with RB1 (PubMed:15659578). Interacts with CD226 (PubMed:15659578). Interacts with SYMPK (PubMed:20861839, PubMed:23070812).</text>
</comment>
<comment type="interaction">
    <interactant intactId="EBI-2515416">
        <id>Q9NP77</id>
    </interactant>
    <interactant intactId="EBI-466029">
        <id>P42858</id>
        <label>HTT</label>
    </interactant>
    <organismsDiffer>false</organismsDiffer>
    <experiments>3</experiments>
</comment>
<comment type="interaction">
    <interactant intactId="EBI-2515416">
        <id>Q9NP77</id>
    </interactant>
    <interactant intactId="EBI-80739">
        <id>O60216</id>
        <label>RAD21</label>
    </interactant>
    <organismsDiffer>false</organismsDiffer>
    <experiments>9</experiments>
</comment>
<comment type="interaction">
    <interactant intactId="EBI-2515416">
        <id>Q9NP77</id>
    </interactant>
    <interactant intactId="EBI-1057252">
        <id>Q8N3U4</id>
        <label>STAG2</label>
    </interactant>
    <organismsDiffer>false</organismsDiffer>
    <experiments>4</experiments>
</comment>
<comment type="interaction">
    <interactant intactId="EBI-15879531">
        <id>Q9NP77-1</id>
    </interactant>
    <interactant intactId="EBI-1051992">
        <id>Q92797</id>
        <label>SYMPK</label>
    </interactant>
    <organismsDiffer>false</organismsDiffer>
    <experiments>3</experiments>
</comment>
<comment type="subcellular location">
    <subcellularLocation>
        <location>Nucleus</location>
    </subcellularLocation>
    <subcellularLocation>
        <location>Cytoplasm</location>
    </subcellularLocation>
    <text>Predominantly in the cytosol.</text>
</comment>
<comment type="alternative products">
    <event type="alternative splicing"/>
    <isoform>
        <id>Q9NP77-1</id>
        <name>1</name>
        <sequence type="displayed"/>
    </isoform>
    <isoform>
        <id>Q9NP77-2</id>
        <name>2</name>
        <sequence type="described" ref="VSP_033005"/>
    </isoform>
</comment>
<comment type="similarity">
    <text evidence="6">Belongs to the SSU72 phosphatase family.</text>
</comment>
<keyword id="KW-0002">3D-structure</keyword>
<keyword id="KW-0025">Alternative splicing</keyword>
<keyword id="KW-0175">Coiled coil</keyword>
<keyword id="KW-0963">Cytoplasm</keyword>
<keyword id="KW-0378">Hydrolase</keyword>
<keyword id="KW-0507">mRNA processing</keyword>
<keyword id="KW-0539">Nucleus</keyword>
<keyword id="KW-0904">Protein phosphatase</keyword>
<keyword id="KW-1267">Proteomics identification</keyword>
<keyword id="KW-1185">Reference proteome</keyword>
<protein>
    <recommendedName>
        <fullName>RNA polymerase II subunit A C-terminal domain phosphatase SSU72</fullName>
        <shortName>CTD phosphatase SSU72</shortName>
        <ecNumber>3.1.3.16</ecNumber>
    </recommendedName>
</protein>
<organism>
    <name type="scientific">Homo sapiens</name>
    <name type="common">Human</name>
    <dbReference type="NCBI Taxonomy" id="9606"/>
    <lineage>
        <taxon>Eukaryota</taxon>
        <taxon>Metazoa</taxon>
        <taxon>Chordata</taxon>
        <taxon>Craniata</taxon>
        <taxon>Vertebrata</taxon>
        <taxon>Euteleostomi</taxon>
        <taxon>Mammalia</taxon>
        <taxon>Eutheria</taxon>
        <taxon>Euarchontoglires</taxon>
        <taxon>Primates</taxon>
        <taxon>Haplorrhini</taxon>
        <taxon>Catarrhini</taxon>
        <taxon>Hominidae</taxon>
        <taxon>Homo</taxon>
    </lineage>
</organism>
<reference key="1">
    <citation type="journal article" date="2005" name="Nucleic Acids Res.">
        <title>Conserved and specific functions of mammalian ssu72.</title>
        <authorList>
            <person name="St Pierre B."/>
            <person name="Liu X."/>
            <person name="Kha L.C."/>
            <person name="Zhu X."/>
            <person name="Ryan O."/>
            <person name="Jiang Z."/>
            <person name="Zacksenhaus E."/>
        </authorList>
    </citation>
    <scope>NUCLEOTIDE SEQUENCE [MRNA]</scope>
    <scope>FUNCTION</scope>
    <scope>INTERACTION WITH RB1; GTF2B AND CD226</scope>
    <scope>MUTAGENESIS OF CYS-12</scope>
</reference>
<reference key="2">
    <citation type="journal article" date="2000" name="Genome Res.">
        <title>Cloning and functional analysis of cDNAs with open reading frames for 300 previously undefined genes expressed in CD34+ hematopoietic stem/progenitor cells.</title>
        <authorList>
            <person name="Zhang Q.-H."/>
            <person name="Ye M."/>
            <person name="Wu X.-Y."/>
            <person name="Ren S.-X."/>
            <person name="Zhao M."/>
            <person name="Zhao C.-J."/>
            <person name="Fu G."/>
            <person name="Shen Y."/>
            <person name="Fan H.-Y."/>
            <person name="Lu G."/>
            <person name="Zhong M."/>
            <person name="Xu X.-R."/>
            <person name="Han Z.-G."/>
            <person name="Zhang J.-W."/>
            <person name="Tao J."/>
            <person name="Huang Q.-H."/>
            <person name="Zhou J."/>
            <person name="Hu G.-X."/>
            <person name="Gu J."/>
            <person name="Chen S.-J."/>
            <person name="Chen Z."/>
        </authorList>
    </citation>
    <scope>NUCLEOTIDE SEQUENCE [LARGE SCALE MRNA]</scope>
    <source>
        <tissue>Umbilical cord blood</tissue>
    </source>
</reference>
<reference key="3">
    <citation type="submission" date="2000-06" db="EMBL/GenBank/DDBJ databases">
        <title>Human acute promyelocytic leukemia cell line NB4's apoptosis related genes.</title>
        <authorList>
            <person name="Yu W.-Q."/>
            <person name="Sun B.-Z."/>
            <person name="Chai Y.-B."/>
            <person name="Zhu F."/>
            <person name="Liu X.-S."/>
            <person name="Li Z."/>
            <person name="Lu F."/>
            <person name="Yan W."/>
            <person name="Yang H."/>
            <person name="Zhao Z.-L."/>
        </authorList>
    </citation>
    <scope>NUCLEOTIDE SEQUENCE [LARGE SCALE MRNA]</scope>
    <source>
        <tissue>Promyelocytic leukemia</tissue>
    </source>
</reference>
<reference key="4">
    <citation type="submission" date="2000-03" db="EMBL/GenBank/DDBJ databases">
        <title>Full-length sequencing of 100 cDNA clones from human adult skeletal muscle.</title>
        <authorList>
            <person name="Stanchi F."/>
            <person name="Lanfranchi G."/>
        </authorList>
    </citation>
    <scope>NUCLEOTIDE SEQUENCE [LARGE SCALE MRNA]</scope>
    <source>
        <tissue>Skeletal muscle</tissue>
    </source>
</reference>
<reference key="5">
    <citation type="journal article" date="2004" name="Nat. Genet.">
        <title>Complete sequencing and characterization of 21,243 full-length human cDNAs.</title>
        <authorList>
            <person name="Ota T."/>
            <person name="Suzuki Y."/>
            <person name="Nishikawa T."/>
            <person name="Otsuki T."/>
            <person name="Sugiyama T."/>
            <person name="Irie R."/>
            <person name="Wakamatsu A."/>
            <person name="Hayashi K."/>
            <person name="Sato H."/>
            <person name="Nagai K."/>
            <person name="Kimura K."/>
            <person name="Makita H."/>
            <person name="Sekine M."/>
            <person name="Obayashi M."/>
            <person name="Nishi T."/>
            <person name="Shibahara T."/>
            <person name="Tanaka T."/>
            <person name="Ishii S."/>
            <person name="Yamamoto J."/>
            <person name="Saito K."/>
            <person name="Kawai Y."/>
            <person name="Isono Y."/>
            <person name="Nakamura Y."/>
            <person name="Nagahari K."/>
            <person name="Murakami K."/>
            <person name="Yasuda T."/>
            <person name="Iwayanagi T."/>
            <person name="Wagatsuma M."/>
            <person name="Shiratori A."/>
            <person name="Sudo H."/>
            <person name="Hosoiri T."/>
            <person name="Kaku Y."/>
            <person name="Kodaira H."/>
            <person name="Kondo H."/>
            <person name="Sugawara M."/>
            <person name="Takahashi M."/>
            <person name="Kanda K."/>
            <person name="Yokoi T."/>
            <person name="Furuya T."/>
            <person name="Kikkawa E."/>
            <person name="Omura Y."/>
            <person name="Abe K."/>
            <person name="Kamihara K."/>
            <person name="Katsuta N."/>
            <person name="Sato K."/>
            <person name="Tanikawa M."/>
            <person name="Yamazaki M."/>
            <person name="Ninomiya K."/>
            <person name="Ishibashi T."/>
            <person name="Yamashita H."/>
            <person name="Murakawa K."/>
            <person name="Fujimori K."/>
            <person name="Tanai H."/>
            <person name="Kimata M."/>
            <person name="Watanabe M."/>
            <person name="Hiraoka S."/>
            <person name="Chiba Y."/>
            <person name="Ishida S."/>
            <person name="Ono Y."/>
            <person name="Takiguchi S."/>
            <person name="Watanabe S."/>
            <person name="Yosida M."/>
            <person name="Hotuta T."/>
            <person name="Kusano J."/>
            <person name="Kanehori K."/>
            <person name="Takahashi-Fujii A."/>
            <person name="Hara H."/>
            <person name="Tanase T.-O."/>
            <person name="Nomura Y."/>
            <person name="Togiya S."/>
            <person name="Komai F."/>
            <person name="Hara R."/>
            <person name="Takeuchi K."/>
            <person name="Arita M."/>
            <person name="Imose N."/>
            <person name="Musashino K."/>
            <person name="Yuuki H."/>
            <person name="Oshima A."/>
            <person name="Sasaki N."/>
            <person name="Aotsuka S."/>
            <person name="Yoshikawa Y."/>
            <person name="Matsunawa H."/>
            <person name="Ichihara T."/>
            <person name="Shiohata N."/>
            <person name="Sano S."/>
            <person name="Moriya S."/>
            <person name="Momiyama H."/>
            <person name="Satoh N."/>
            <person name="Takami S."/>
            <person name="Terashima Y."/>
            <person name="Suzuki O."/>
            <person name="Nakagawa S."/>
            <person name="Senoh A."/>
            <person name="Mizoguchi H."/>
            <person name="Goto Y."/>
            <person name="Shimizu F."/>
            <person name="Wakebe H."/>
            <person name="Hishigaki H."/>
            <person name="Watanabe T."/>
            <person name="Sugiyama A."/>
            <person name="Takemoto M."/>
            <person name="Kawakami B."/>
            <person name="Yamazaki M."/>
            <person name="Watanabe K."/>
            <person name="Kumagai A."/>
            <person name="Itakura S."/>
            <person name="Fukuzumi Y."/>
            <person name="Fujimori Y."/>
            <person name="Komiyama M."/>
            <person name="Tashiro H."/>
            <person name="Tanigami A."/>
            <person name="Fujiwara T."/>
            <person name="Ono T."/>
            <person name="Yamada K."/>
            <person name="Fujii Y."/>
            <person name="Ozaki K."/>
            <person name="Hirao M."/>
            <person name="Ohmori Y."/>
            <person name="Kawabata A."/>
            <person name="Hikiji T."/>
            <person name="Kobatake N."/>
            <person name="Inagaki H."/>
            <person name="Ikema Y."/>
            <person name="Okamoto S."/>
            <person name="Okitani R."/>
            <person name="Kawakami T."/>
            <person name="Noguchi S."/>
            <person name="Itoh T."/>
            <person name="Shigeta K."/>
            <person name="Senba T."/>
            <person name="Matsumura K."/>
            <person name="Nakajima Y."/>
            <person name="Mizuno T."/>
            <person name="Morinaga M."/>
            <person name="Sasaki M."/>
            <person name="Togashi T."/>
            <person name="Oyama M."/>
            <person name="Hata H."/>
            <person name="Watanabe M."/>
            <person name="Komatsu T."/>
            <person name="Mizushima-Sugano J."/>
            <person name="Satoh T."/>
            <person name="Shirai Y."/>
            <person name="Takahashi Y."/>
            <person name="Nakagawa K."/>
            <person name="Okumura K."/>
            <person name="Nagase T."/>
            <person name="Nomura N."/>
            <person name="Kikuchi H."/>
            <person name="Masuho Y."/>
            <person name="Yamashita R."/>
            <person name="Nakai K."/>
            <person name="Yada T."/>
            <person name="Nakamura Y."/>
            <person name="Ohara O."/>
            <person name="Isogai T."/>
            <person name="Sugano S."/>
        </authorList>
    </citation>
    <scope>NUCLEOTIDE SEQUENCE [LARGE SCALE MRNA]</scope>
    <source>
        <tissue>Placenta</tissue>
        <tissue>Teratocarcinoma</tissue>
        <tissue>Tongue</tissue>
    </source>
</reference>
<reference key="6">
    <citation type="journal article" date="2006" name="Nature">
        <title>The DNA sequence and biological annotation of human chromosome 1.</title>
        <authorList>
            <person name="Gregory S.G."/>
            <person name="Barlow K.F."/>
            <person name="McLay K.E."/>
            <person name="Kaul R."/>
            <person name="Swarbreck D."/>
            <person name="Dunham A."/>
            <person name="Scott C.E."/>
            <person name="Howe K.L."/>
            <person name="Woodfine K."/>
            <person name="Spencer C.C.A."/>
            <person name="Jones M.C."/>
            <person name="Gillson C."/>
            <person name="Searle S."/>
            <person name="Zhou Y."/>
            <person name="Kokocinski F."/>
            <person name="McDonald L."/>
            <person name="Evans R."/>
            <person name="Phillips K."/>
            <person name="Atkinson A."/>
            <person name="Cooper R."/>
            <person name="Jones C."/>
            <person name="Hall R.E."/>
            <person name="Andrews T.D."/>
            <person name="Lloyd C."/>
            <person name="Ainscough R."/>
            <person name="Almeida J.P."/>
            <person name="Ambrose K.D."/>
            <person name="Anderson F."/>
            <person name="Andrew R.W."/>
            <person name="Ashwell R.I.S."/>
            <person name="Aubin K."/>
            <person name="Babbage A.K."/>
            <person name="Bagguley C.L."/>
            <person name="Bailey J."/>
            <person name="Beasley H."/>
            <person name="Bethel G."/>
            <person name="Bird C.P."/>
            <person name="Bray-Allen S."/>
            <person name="Brown J.Y."/>
            <person name="Brown A.J."/>
            <person name="Buckley D."/>
            <person name="Burton J."/>
            <person name="Bye J."/>
            <person name="Carder C."/>
            <person name="Chapman J.C."/>
            <person name="Clark S.Y."/>
            <person name="Clarke G."/>
            <person name="Clee C."/>
            <person name="Cobley V."/>
            <person name="Collier R.E."/>
            <person name="Corby N."/>
            <person name="Coville G.J."/>
            <person name="Davies J."/>
            <person name="Deadman R."/>
            <person name="Dunn M."/>
            <person name="Earthrowl M."/>
            <person name="Ellington A.G."/>
            <person name="Errington H."/>
            <person name="Frankish A."/>
            <person name="Frankland J."/>
            <person name="French L."/>
            <person name="Garner P."/>
            <person name="Garnett J."/>
            <person name="Gay L."/>
            <person name="Ghori M.R.J."/>
            <person name="Gibson R."/>
            <person name="Gilby L.M."/>
            <person name="Gillett W."/>
            <person name="Glithero R.J."/>
            <person name="Grafham D.V."/>
            <person name="Griffiths C."/>
            <person name="Griffiths-Jones S."/>
            <person name="Grocock R."/>
            <person name="Hammond S."/>
            <person name="Harrison E.S.I."/>
            <person name="Hart E."/>
            <person name="Haugen E."/>
            <person name="Heath P.D."/>
            <person name="Holmes S."/>
            <person name="Holt K."/>
            <person name="Howden P.J."/>
            <person name="Hunt A.R."/>
            <person name="Hunt S.E."/>
            <person name="Hunter G."/>
            <person name="Isherwood J."/>
            <person name="James R."/>
            <person name="Johnson C."/>
            <person name="Johnson D."/>
            <person name="Joy A."/>
            <person name="Kay M."/>
            <person name="Kershaw J.K."/>
            <person name="Kibukawa M."/>
            <person name="Kimberley A.M."/>
            <person name="King A."/>
            <person name="Knights A.J."/>
            <person name="Lad H."/>
            <person name="Laird G."/>
            <person name="Lawlor S."/>
            <person name="Leongamornlert D.A."/>
            <person name="Lloyd D.M."/>
            <person name="Loveland J."/>
            <person name="Lovell J."/>
            <person name="Lush M.J."/>
            <person name="Lyne R."/>
            <person name="Martin S."/>
            <person name="Mashreghi-Mohammadi M."/>
            <person name="Matthews L."/>
            <person name="Matthews N.S.W."/>
            <person name="McLaren S."/>
            <person name="Milne S."/>
            <person name="Mistry S."/>
            <person name="Moore M.J.F."/>
            <person name="Nickerson T."/>
            <person name="O'Dell C.N."/>
            <person name="Oliver K."/>
            <person name="Palmeiri A."/>
            <person name="Palmer S.A."/>
            <person name="Parker A."/>
            <person name="Patel D."/>
            <person name="Pearce A.V."/>
            <person name="Peck A.I."/>
            <person name="Pelan S."/>
            <person name="Phelps K."/>
            <person name="Phillimore B.J."/>
            <person name="Plumb R."/>
            <person name="Rajan J."/>
            <person name="Raymond C."/>
            <person name="Rouse G."/>
            <person name="Saenphimmachak C."/>
            <person name="Sehra H.K."/>
            <person name="Sheridan E."/>
            <person name="Shownkeen R."/>
            <person name="Sims S."/>
            <person name="Skuce C.D."/>
            <person name="Smith M."/>
            <person name="Steward C."/>
            <person name="Subramanian S."/>
            <person name="Sycamore N."/>
            <person name="Tracey A."/>
            <person name="Tromans A."/>
            <person name="Van Helmond Z."/>
            <person name="Wall M."/>
            <person name="Wallis J.M."/>
            <person name="White S."/>
            <person name="Whitehead S.L."/>
            <person name="Wilkinson J.E."/>
            <person name="Willey D.L."/>
            <person name="Williams H."/>
            <person name="Wilming L."/>
            <person name="Wray P.W."/>
            <person name="Wu Z."/>
            <person name="Coulson A."/>
            <person name="Vaudin M."/>
            <person name="Sulston J.E."/>
            <person name="Durbin R.M."/>
            <person name="Hubbard T."/>
            <person name="Wooster R."/>
            <person name="Dunham I."/>
            <person name="Carter N.P."/>
            <person name="McVean G."/>
            <person name="Ross M.T."/>
            <person name="Harrow J."/>
            <person name="Olson M.V."/>
            <person name="Beck S."/>
            <person name="Rogers J."/>
            <person name="Bentley D.R."/>
        </authorList>
    </citation>
    <scope>NUCLEOTIDE SEQUENCE [LARGE SCALE GENOMIC DNA]</scope>
</reference>
<reference key="7">
    <citation type="submission" date="2005-07" db="EMBL/GenBank/DDBJ databases">
        <authorList>
            <person name="Mural R.J."/>
            <person name="Istrail S."/>
            <person name="Sutton G.G."/>
            <person name="Florea L."/>
            <person name="Halpern A.L."/>
            <person name="Mobarry C.M."/>
            <person name="Lippert R."/>
            <person name="Walenz B."/>
            <person name="Shatkay H."/>
            <person name="Dew I."/>
            <person name="Miller J.R."/>
            <person name="Flanigan M.J."/>
            <person name="Edwards N.J."/>
            <person name="Bolanos R."/>
            <person name="Fasulo D."/>
            <person name="Halldorsson B.V."/>
            <person name="Hannenhalli S."/>
            <person name="Turner R."/>
            <person name="Yooseph S."/>
            <person name="Lu F."/>
            <person name="Nusskern D.R."/>
            <person name="Shue B.C."/>
            <person name="Zheng X.H."/>
            <person name="Zhong F."/>
            <person name="Delcher A.L."/>
            <person name="Huson D.H."/>
            <person name="Kravitz S.A."/>
            <person name="Mouchard L."/>
            <person name="Reinert K."/>
            <person name="Remington K.A."/>
            <person name="Clark A.G."/>
            <person name="Waterman M.S."/>
            <person name="Eichler E.E."/>
            <person name="Adams M.D."/>
            <person name="Hunkapiller M.W."/>
            <person name="Myers E.W."/>
            <person name="Venter J.C."/>
        </authorList>
    </citation>
    <scope>NUCLEOTIDE SEQUENCE [LARGE SCALE GENOMIC DNA]</scope>
</reference>
<reference key="8">
    <citation type="journal article" date="2004" name="Genome Res.">
        <title>The status, quality, and expansion of the NIH full-length cDNA project: the Mammalian Gene Collection (MGC).</title>
        <authorList>
            <consortium name="The MGC Project Team"/>
        </authorList>
    </citation>
    <scope>NUCLEOTIDE SEQUENCE [LARGE SCALE MRNA]</scope>
    <source>
        <tissue>Muscle</tissue>
    </source>
</reference>
<reference key="9">
    <citation type="journal article" date="2011" name="BMC Syst. Biol.">
        <title>Initial characterization of the human central proteome.</title>
        <authorList>
            <person name="Burkard T.R."/>
            <person name="Planyavsky M."/>
            <person name="Kaupe I."/>
            <person name="Breitwieser F.P."/>
            <person name="Buerckstuemmer T."/>
            <person name="Bennett K.L."/>
            <person name="Superti-Furga G."/>
            <person name="Colinge J."/>
        </authorList>
    </citation>
    <scope>IDENTIFICATION BY MASS SPECTROMETRY [LARGE SCALE ANALYSIS]</scope>
</reference>
<reference key="10">
    <citation type="journal article" date="2018" name="J. Biol. Chem.">
        <title>Structural dissection of an interaction between transcription initiation and termination factors implicated in promoter-terminator cross-talk.</title>
        <authorList>
            <person name="Bratkowski M."/>
            <person name="Unarta I.C."/>
            <person name="Zhu L."/>
            <person name="Shubbar M."/>
            <person name="Huang X."/>
            <person name="Liu X."/>
        </authorList>
    </citation>
    <scope>INTERACTION WITH GTF2B</scope>
</reference>
<reference key="11">
    <citation type="journal article" date="2010" name="Nature">
        <title>Crystal structure of the human symplekin-Ssu72-CTD phosphopeptide complex.</title>
        <authorList>
            <person name="Xiang K."/>
            <person name="Nagaike T."/>
            <person name="Xiang S."/>
            <person name="Kilic T."/>
            <person name="Beh M.M."/>
            <person name="Manley J.L."/>
            <person name="Tong L."/>
        </authorList>
    </citation>
    <scope>X-RAY CRYSTALLOGRAPHY (2.4 ANGSTROMS) IN COMPLEX WITH SYMPK</scope>
    <scope>FUNCTION</scope>
    <scope>CATALYTIC ACTIVITY</scope>
    <scope>INTERACTION WITH SYMPK</scope>
</reference>
<reference key="12">
    <citation type="journal article" date="2012" name="Genes Dev.">
        <title>An unexpected binding mode for a Pol II CTD peptide phosphorylated at Ser7 in the active site of the CTD phosphatase Ssu72.</title>
        <authorList>
            <person name="Xiang K."/>
            <person name="Manley J.L."/>
            <person name="Tong L."/>
        </authorList>
    </citation>
    <scope>X-RAY CRYSTALLOGRAPHY (2.0 ANGSTROMS) IN COMPLEX WITH SYMPK</scope>
    <scope>FUNCTION</scope>
    <scope>CATALYTIC ACTIVITY</scope>
    <scope>INTERACTION WITH SYMPK</scope>
</reference>